<accession>A4YUP3</accession>
<gene>
    <name evidence="1" type="primary">hfq</name>
    <name type="ordered locus">BRADO3855</name>
</gene>
<comment type="function">
    <text evidence="1">RNA chaperone that binds small regulatory RNA (sRNAs) and mRNAs to facilitate mRNA translational regulation in response to envelope stress, environmental stress and changes in metabolite concentrations. Also binds with high specificity to tRNAs.</text>
</comment>
<comment type="subunit">
    <text evidence="1">Homohexamer.</text>
</comment>
<comment type="similarity">
    <text evidence="1">Belongs to the Hfq family.</text>
</comment>
<reference key="1">
    <citation type="journal article" date="2007" name="Science">
        <title>Legumes symbioses: absence of nod genes in photosynthetic bradyrhizobia.</title>
        <authorList>
            <person name="Giraud E."/>
            <person name="Moulin L."/>
            <person name="Vallenet D."/>
            <person name="Barbe V."/>
            <person name="Cytryn E."/>
            <person name="Avarre J.-C."/>
            <person name="Jaubert M."/>
            <person name="Simon D."/>
            <person name="Cartieaux F."/>
            <person name="Prin Y."/>
            <person name="Bena G."/>
            <person name="Hannibal L."/>
            <person name="Fardoux J."/>
            <person name="Kojadinovic M."/>
            <person name="Vuillet L."/>
            <person name="Lajus A."/>
            <person name="Cruveiller S."/>
            <person name="Rouy Z."/>
            <person name="Mangenot S."/>
            <person name="Segurens B."/>
            <person name="Dossat C."/>
            <person name="Franck W.L."/>
            <person name="Chang W.-S."/>
            <person name="Saunders E."/>
            <person name="Bruce D."/>
            <person name="Richardson P."/>
            <person name="Normand P."/>
            <person name="Dreyfus B."/>
            <person name="Pignol D."/>
            <person name="Stacey G."/>
            <person name="Emerich D."/>
            <person name="Vermeglio A."/>
            <person name="Medigue C."/>
            <person name="Sadowsky M."/>
        </authorList>
    </citation>
    <scope>NUCLEOTIDE SEQUENCE [LARGE SCALE GENOMIC DNA]</scope>
    <source>
        <strain>ORS 278</strain>
    </source>
</reference>
<dbReference type="EMBL" id="CU234118">
    <property type="protein sequence ID" value="CAL77619.1"/>
    <property type="molecule type" value="Genomic_DNA"/>
</dbReference>
<dbReference type="RefSeq" id="WP_006613906.1">
    <property type="nucleotide sequence ID" value="NC_009445.1"/>
</dbReference>
<dbReference type="SMR" id="A4YUP3"/>
<dbReference type="STRING" id="114615.BRADO3855"/>
<dbReference type="KEGG" id="bra:BRADO3855"/>
<dbReference type="eggNOG" id="COG1923">
    <property type="taxonomic scope" value="Bacteria"/>
</dbReference>
<dbReference type="HOGENOM" id="CLU_113688_0_0_5"/>
<dbReference type="OrthoDB" id="9799751at2"/>
<dbReference type="Proteomes" id="UP000001994">
    <property type="component" value="Chromosome"/>
</dbReference>
<dbReference type="GO" id="GO:0005829">
    <property type="term" value="C:cytosol"/>
    <property type="evidence" value="ECO:0007669"/>
    <property type="project" value="TreeGrafter"/>
</dbReference>
<dbReference type="GO" id="GO:0003723">
    <property type="term" value="F:RNA binding"/>
    <property type="evidence" value="ECO:0007669"/>
    <property type="project" value="UniProtKB-UniRule"/>
</dbReference>
<dbReference type="GO" id="GO:0006355">
    <property type="term" value="P:regulation of DNA-templated transcription"/>
    <property type="evidence" value="ECO:0007669"/>
    <property type="project" value="InterPro"/>
</dbReference>
<dbReference type="GO" id="GO:0043487">
    <property type="term" value="P:regulation of RNA stability"/>
    <property type="evidence" value="ECO:0007669"/>
    <property type="project" value="TreeGrafter"/>
</dbReference>
<dbReference type="GO" id="GO:0045974">
    <property type="term" value="P:regulation of translation, ncRNA-mediated"/>
    <property type="evidence" value="ECO:0007669"/>
    <property type="project" value="TreeGrafter"/>
</dbReference>
<dbReference type="CDD" id="cd01716">
    <property type="entry name" value="Hfq"/>
    <property type="match status" value="1"/>
</dbReference>
<dbReference type="FunFam" id="2.30.30.100:FF:000001">
    <property type="entry name" value="RNA-binding protein Hfq"/>
    <property type="match status" value="1"/>
</dbReference>
<dbReference type="Gene3D" id="2.30.30.100">
    <property type="match status" value="1"/>
</dbReference>
<dbReference type="HAMAP" id="MF_00436">
    <property type="entry name" value="Hfq"/>
    <property type="match status" value="1"/>
</dbReference>
<dbReference type="InterPro" id="IPR005001">
    <property type="entry name" value="Hfq"/>
</dbReference>
<dbReference type="InterPro" id="IPR010920">
    <property type="entry name" value="LSM_dom_sf"/>
</dbReference>
<dbReference type="InterPro" id="IPR047575">
    <property type="entry name" value="Sm"/>
</dbReference>
<dbReference type="NCBIfam" id="TIGR02383">
    <property type="entry name" value="Hfq"/>
    <property type="match status" value="1"/>
</dbReference>
<dbReference type="NCBIfam" id="NF001602">
    <property type="entry name" value="PRK00395.1"/>
    <property type="match status" value="1"/>
</dbReference>
<dbReference type="PANTHER" id="PTHR34772">
    <property type="entry name" value="RNA-BINDING PROTEIN HFQ"/>
    <property type="match status" value="1"/>
</dbReference>
<dbReference type="PANTHER" id="PTHR34772:SF1">
    <property type="entry name" value="RNA-BINDING PROTEIN HFQ"/>
    <property type="match status" value="1"/>
</dbReference>
<dbReference type="Pfam" id="PF17209">
    <property type="entry name" value="Hfq"/>
    <property type="match status" value="1"/>
</dbReference>
<dbReference type="SUPFAM" id="SSF50182">
    <property type="entry name" value="Sm-like ribonucleoproteins"/>
    <property type="match status" value="1"/>
</dbReference>
<dbReference type="PROSITE" id="PS52002">
    <property type="entry name" value="SM"/>
    <property type="match status" value="1"/>
</dbReference>
<sequence length="82" mass="9141">MAADRAQNLQDTFLNHVRKTKTPLTIFLVNGVKLQGIVTWFDNFCLLLRRDGHSQLVYKHAISTIMPGAPIQLFEGGEDASA</sequence>
<name>HFQ_BRASO</name>
<organism>
    <name type="scientific">Bradyrhizobium sp. (strain ORS 278)</name>
    <dbReference type="NCBI Taxonomy" id="114615"/>
    <lineage>
        <taxon>Bacteria</taxon>
        <taxon>Pseudomonadati</taxon>
        <taxon>Pseudomonadota</taxon>
        <taxon>Alphaproteobacteria</taxon>
        <taxon>Hyphomicrobiales</taxon>
        <taxon>Nitrobacteraceae</taxon>
        <taxon>Bradyrhizobium</taxon>
    </lineage>
</organism>
<proteinExistence type="inferred from homology"/>
<evidence type="ECO:0000255" key="1">
    <source>
        <dbReference type="HAMAP-Rule" id="MF_00436"/>
    </source>
</evidence>
<evidence type="ECO:0000255" key="2">
    <source>
        <dbReference type="PROSITE-ProRule" id="PRU01346"/>
    </source>
</evidence>
<keyword id="KW-1185">Reference proteome</keyword>
<keyword id="KW-0694">RNA-binding</keyword>
<keyword id="KW-0346">Stress response</keyword>
<feature type="chain" id="PRO_1000080656" description="RNA-binding protein Hfq">
    <location>
        <begin position="1"/>
        <end position="82"/>
    </location>
</feature>
<feature type="domain" description="Sm" evidence="2">
    <location>
        <begin position="11"/>
        <end position="71"/>
    </location>
</feature>
<protein>
    <recommendedName>
        <fullName evidence="1">RNA-binding protein Hfq</fullName>
    </recommendedName>
</protein>